<protein>
    <recommendedName>
        <fullName evidence="1">Phosphate acyltransferase</fullName>
        <ecNumber evidence="1">2.3.1.274</ecNumber>
    </recommendedName>
    <alternativeName>
        <fullName evidence="1">Acyl-ACP phosphotransacylase</fullName>
    </alternativeName>
    <alternativeName>
        <fullName evidence="1">Acyl-[acyl-carrier-protein]--phosphate acyltransferase</fullName>
    </alternativeName>
    <alternativeName>
        <fullName evidence="1">Phosphate-acyl-ACP acyltransferase</fullName>
    </alternativeName>
</protein>
<accession>Q1IJ05</accession>
<evidence type="ECO:0000255" key="1">
    <source>
        <dbReference type="HAMAP-Rule" id="MF_00019"/>
    </source>
</evidence>
<organism>
    <name type="scientific">Koribacter versatilis (strain Ellin345)</name>
    <dbReference type="NCBI Taxonomy" id="204669"/>
    <lineage>
        <taxon>Bacteria</taxon>
        <taxon>Pseudomonadati</taxon>
        <taxon>Acidobacteriota</taxon>
        <taxon>Terriglobia</taxon>
        <taxon>Terriglobales</taxon>
        <taxon>Candidatus Korobacteraceae</taxon>
        <taxon>Candidatus Korobacter</taxon>
    </lineage>
</organism>
<dbReference type="EC" id="2.3.1.274" evidence="1"/>
<dbReference type="EMBL" id="CP000360">
    <property type="protein sequence ID" value="ABF43145.1"/>
    <property type="molecule type" value="Genomic_DNA"/>
</dbReference>
<dbReference type="RefSeq" id="WP_011524944.1">
    <property type="nucleotide sequence ID" value="NC_008009.1"/>
</dbReference>
<dbReference type="SMR" id="Q1IJ05"/>
<dbReference type="STRING" id="204669.Acid345_4145"/>
<dbReference type="EnsemblBacteria" id="ABF43145">
    <property type="protein sequence ID" value="ABF43145"/>
    <property type="gene ID" value="Acid345_4145"/>
</dbReference>
<dbReference type="KEGG" id="aba:Acid345_4145"/>
<dbReference type="eggNOG" id="COG0416">
    <property type="taxonomic scope" value="Bacteria"/>
</dbReference>
<dbReference type="HOGENOM" id="CLU_039379_1_1_0"/>
<dbReference type="OrthoDB" id="9806408at2"/>
<dbReference type="UniPathway" id="UPA00085"/>
<dbReference type="Proteomes" id="UP000002432">
    <property type="component" value="Chromosome"/>
</dbReference>
<dbReference type="GO" id="GO:0005737">
    <property type="term" value="C:cytoplasm"/>
    <property type="evidence" value="ECO:0007669"/>
    <property type="project" value="UniProtKB-SubCell"/>
</dbReference>
<dbReference type="GO" id="GO:0043811">
    <property type="term" value="F:phosphate:acyl-[acyl carrier protein] acyltransferase activity"/>
    <property type="evidence" value="ECO:0007669"/>
    <property type="project" value="UniProtKB-UniRule"/>
</dbReference>
<dbReference type="GO" id="GO:0006633">
    <property type="term" value="P:fatty acid biosynthetic process"/>
    <property type="evidence" value="ECO:0007669"/>
    <property type="project" value="UniProtKB-UniRule"/>
</dbReference>
<dbReference type="GO" id="GO:0008654">
    <property type="term" value="P:phospholipid biosynthetic process"/>
    <property type="evidence" value="ECO:0007669"/>
    <property type="project" value="UniProtKB-KW"/>
</dbReference>
<dbReference type="Gene3D" id="3.40.718.10">
    <property type="entry name" value="Isopropylmalate Dehydrogenase"/>
    <property type="match status" value="1"/>
</dbReference>
<dbReference type="HAMAP" id="MF_00019">
    <property type="entry name" value="PlsX"/>
    <property type="match status" value="1"/>
</dbReference>
<dbReference type="InterPro" id="IPR003664">
    <property type="entry name" value="FA_synthesis"/>
</dbReference>
<dbReference type="InterPro" id="IPR012281">
    <property type="entry name" value="Phospholipid_synth_PlsX-like"/>
</dbReference>
<dbReference type="NCBIfam" id="TIGR00182">
    <property type="entry name" value="plsX"/>
    <property type="match status" value="1"/>
</dbReference>
<dbReference type="PANTHER" id="PTHR30100">
    <property type="entry name" value="FATTY ACID/PHOSPHOLIPID SYNTHESIS PROTEIN PLSX"/>
    <property type="match status" value="1"/>
</dbReference>
<dbReference type="PANTHER" id="PTHR30100:SF1">
    <property type="entry name" value="PHOSPHATE ACYLTRANSFERASE"/>
    <property type="match status" value="1"/>
</dbReference>
<dbReference type="Pfam" id="PF02504">
    <property type="entry name" value="FA_synthesis"/>
    <property type="match status" value="1"/>
</dbReference>
<dbReference type="PIRSF" id="PIRSF002465">
    <property type="entry name" value="Phsphlp_syn_PlsX"/>
    <property type="match status" value="1"/>
</dbReference>
<dbReference type="SUPFAM" id="SSF53659">
    <property type="entry name" value="Isocitrate/Isopropylmalate dehydrogenase-like"/>
    <property type="match status" value="1"/>
</dbReference>
<keyword id="KW-0963">Cytoplasm</keyword>
<keyword id="KW-0444">Lipid biosynthesis</keyword>
<keyword id="KW-0443">Lipid metabolism</keyword>
<keyword id="KW-0594">Phospholipid biosynthesis</keyword>
<keyword id="KW-1208">Phospholipid metabolism</keyword>
<keyword id="KW-1185">Reference proteome</keyword>
<keyword id="KW-0808">Transferase</keyword>
<comment type="function">
    <text evidence="1">Catalyzes the reversible formation of acyl-phosphate (acyl-PO(4)) from acyl-[acyl-carrier-protein] (acyl-ACP). This enzyme utilizes acyl-ACP as fatty acyl donor, but not acyl-CoA.</text>
</comment>
<comment type="catalytic activity">
    <reaction evidence="1">
        <text>a fatty acyl-[ACP] + phosphate = an acyl phosphate + holo-[ACP]</text>
        <dbReference type="Rhea" id="RHEA:42292"/>
        <dbReference type="Rhea" id="RHEA-COMP:9685"/>
        <dbReference type="Rhea" id="RHEA-COMP:14125"/>
        <dbReference type="ChEBI" id="CHEBI:43474"/>
        <dbReference type="ChEBI" id="CHEBI:59918"/>
        <dbReference type="ChEBI" id="CHEBI:64479"/>
        <dbReference type="ChEBI" id="CHEBI:138651"/>
        <dbReference type="EC" id="2.3.1.274"/>
    </reaction>
</comment>
<comment type="pathway">
    <text evidence="1">Lipid metabolism; phospholipid metabolism.</text>
</comment>
<comment type="subunit">
    <text evidence="1">Homodimer. Probably interacts with PlsY.</text>
</comment>
<comment type="subcellular location">
    <subcellularLocation>
        <location evidence="1">Cytoplasm</location>
    </subcellularLocation>
    <text evidence="1">Associated with the membrane possibly through PlsY.</text>
</comment>
<comment type="similarity">
    <text evidence="1">Belongs to the PlsX family.</text>
</comment>
<proteinExistence type="inferred from homology"/>
<reference key="1">
    <citation type="journal article" date="2009" name="Appl. Environ. Microbiol.">
        <title>Three genomes from the phylum Acidobacteria provide insight into the lifestyles of these microorganisms in soils.</title>
        <authorList>
            <person name="Ward N.L."/>
            <person name="Challacombe J.F."/>
            <person name="Janssen P.H."/>
            <person name="Henrissat B."/>
            <person name="Coutinho P.M."/>
            <person name="Wu M."/>
            <person name="Xie G."/>
            <person name="Haft D.H."/>
            <person name="Sait M."/>
            <person name="Badger J."/>
            <person name="Barabote R.D."/>
            <person name="Bradley B."/>
            <person name="Brettin T.S."/>
            <person name="Brinkac L.M."/>
            <person name="Bruce D."/>
            <person name="Creasy T."/>
            <person name="Daugherty S.C."/>
            <person name="Davidsen T.M."/>
            <person name="DeBoy R.T."/>
            <person name="Detter J.C."/>
            <person name="Dodson R.J."/>
            <person name="Durkin A.S."/>
            <person name="Ganapathy A."/>
            <person name="Gwinn-Giglio M."/>
            <person name="Han C.S."/>
            <person name="Khouri H."/>
            <person name="Kiss H."/>
            <person name="Kothari S.P."/>
            <person name="Madupu R."/>
            <person name="Nelson K.E."/>
            <person name="Nelson W.C."/>
            <person name="Paulsen I."/>
            <person name="Penn K."/>
            <person name="Ren Q."/>
            <person name="Rosovitz M.J."/>
            <person name="Selengut J.D."/>
            <person name="Shrivastava S."/>
            <person name="Sullivan S.A."/>
            <person name="Tapia R."/>
            <person name="Thompson L.S."/>
            <person name="Watkins K.L."/>
            <person name="Yang Q."/>
            <person name="Yu C."/>
            <person name="Zafar N."/>
            <person name="Zhou L."/>
            <person name="Kuske C.R."/>
        </authorList>
    </citation>
    <scope>NUCLEOTIDE SEQUENCE [LARGE SCALE GENOMIC DNA]</scope>
    <source>
        <strain>Ellin345</strain>
    </source>
</reference>
<feature type="chain" id="PRO_1000070985" description="Phosphate acyltransferase">
    <location>
        <begin position="1"/>
        <end position="359"/>
    </location>
</feature>
<gene>
    <name evidence="1" type="primary">plsX</name>
    <name type="ordered locus">Acid345_4145</name>
</gene>
<name>PLSX_KORVE</name>
<sequence>MPITIAVDAMGSDKAPTPEIEGALQAIRHFDVRVILVGKQDVLREHLGAHAHPGRLPIEIVHASEVISMHDKAALAVRSKRDSSMRVGLRLVREGKADAFVTAGNTGAAMATAKMVLGALPGVDRPALAAVFPTEKRTAAILLDVGANVDCKPQNLQQFAIMGEVYFRTVFAGKSPHARSPRVGILSIGEEETKGNELTREAYKLVKTLPLNFVGNVEGRDLFNGNVDVLVCDGFVGNVALKISEGLVKTVREMLKESLQQTIARQVGFLLSRQAFVDFKKRLDYSEYGGAPLLGLKGAAFVGHGSSNANAIKNAIRVAAEYVEHRVNEAIAREIAAASEKLGNHHSSAKKEEGEEARA</sequence>